<comment type="function">
    <text evidence="5">UDP-N-acetylglucosamine--dolichyl-phosphate N-acetylglucosaminephosphotransferase that operates in the biosynthetic pathway of dolichol-linked oligosaccharides, the glycan precursors employed in protein asparagine (N)-glycosylation. The assembly of dolichol-linked oligosaccharides begins on the cytosolic side of the endoplasmic reticulum membrane and finishes in its lumen. The sequential addition of sugars to dolichol pyrophosphate produces dolichol-linked oligosaccharides containing fourteen sugars, including two GlcNAcs, nine mannoses and three glucoses. Once assembled, the oligosaccharide is transferred from the lipid to nascent proteins by oligosaccharyltransferases. Catalyzes the initial step of dolichol-linked oligosaccharide biosynthesis, transfering GlcNAc-1-P from cytosolic UDP-GlcNAc onto the carrier lipid dolichyl phosphate (P-dolichol), yielding GlcNAc-P-P-dolichol embedded in the cytoplasmic leaflet of the endoplasmic reticulum membrane.</text>
</comment>
<comment type="catalytic activity">
    <reaction evidence="5">
        <text>a di-trans,poly-cis-dolichyl phosphate + UDP-N-acetyl-alpha-D-glucosamine = an N-acetyl-alpha-D-glucosaminyl-diphospho-di-trans,poly-cis-dolichol + UMP</text>
        <dbReference type="Rhea" id="RHEA:13289"/>
        <dbReference type="Rhea" id="RHEA-COMP:19498"/>
        <dbReference type="Rhea" id="RHEA-COMP:19507"/>
        <dbReference type="ChEBI" id="CHEBI:57683"/>
        <dbReference type="ChEBI" id="CHEBI:57705"/>
        <dbReference type="ChEBI" id="CHEBI:57865"/>
        <dbReference type="ChEBI" id="CHEBI:58427"/>
        <dbReference type="EC" id="2.7.8.15"/>
    </reaction>
    <physiologicalReaction direction="left-to-right" evidence="7">
        <dbReference type="Rhea" id="RHEA:13290"/>
    </physiologicalReaction>
</comment>
<comment type="cofactor">
    <cofactor evidence="2">
        <name>Mg(2+)</name>
        <dbReference type="ChEBI" id="CHEBI:18420"/>
    </cofactor>
</comment>
<comment type="activity regulation">
    <text evidence="4 5">Inhibited by natural nucleoside antibiotic tunicamycin, which acts as a structural analog and competitor of UDP-GlcNAc.</text>
</comment>
<comment type="pathway">
    <text evidence="7">Protein modification; protein glycosylation.</text>
</comment>
<comment type="subcellular location">
    <subcellularLocation>
        <location evidence="1">Endoplasmic reticulum membrane</location>
        <topology evidence="2">Multi-pass membrane protein</topology>
    </subcellularLocation>
</comment>
<comment type="similarity">
    <text evidence="6">Belongs to the glycosyltransferase 4 family.</text>
</comment>
<accession>P07286</accession>
<accession>D6VQN9</accession>
<evidence type="ECO:0000250" key="1">
    <source>
        <dbReference type="UniProtKB" id="P23338"/>
    </source>
</evidence>
<evidence type="ECO:0000250" key="2">
    <source>
        <dbReference type="UniProtKB" id="Q9H3H5"/>
    </source>
</evidence>
<evidence type="ECO:0000255" key="3"/>
<evidence type="ECO:0000269" key="4">
    <source>
    </source>
</evidence>
<evidence type="ECO:0000269" key="5">
    <source>
    </source>
</evidence>
<evidence type="ECO:0000305" key="6"/>
<evidence type="ECO:0000305" key="7">
    <source>
    </source>
</evidence>
<keyword id="KW-0256">Endoplasmic reticulum</keyword>
<keyword id="KW-0328">Glycosyltransferase</keyword>
<keyword id="KW-0460">Magnesium</keyword>
<keyword id="KW-0472">Membrane</keyword>
<keyword id="KW-0479">Metal-binding</keyword>
<keyword id="KW-1185">Reference proteome</keyword>
<keyword id="KW-0808">Transferase</keyword>
<keyword id="KW-0812">Transmembrane</keyword>
<keyword id="KW-1133">Transmembrane helix</keyword>
<gene>
    <name type="primary">ALG7</name>
    <name type="synonym">TUR1</name>
    <name type="ordered locus">YBR243C</name>
    <name type="ORF">YBR1628</name>
</gene>
<protein>
    <recommendedName>
        <fullName>UDP-N-acetylglucosamine--dolichyl-phosphate N-acetylglucosaminephosphotransferase</fullName>
        <ecNumber>2.7.8.15</ecNumber>
    </recommendedName>
    <alternativeName>
        <fullName>GlcNAc-1-P transferase</fullName>
        <shortName>G1PT</shortName>
        <shortName>GPT</shortName>
    </alternativeName>
    <alternativeName>
        <fullName>N-acetylglucosamine-1-phosphate transferase</fullName>
    </alternativeName>
    <alternativeName>
        <fullName>Tunicamycin resistance protein 1</fullName>
    </alternativeName>
</protein>
<sequence length="448" mass="50368">MLRLFSLALITCLIYYSKNQGPSALVAAVGFGIAGYLATDMLIPRVGKSFIKIGLFGKDLSKPGRPVLPETIGAIPAAVYLFVMFIYIPFIFYKYMVITTSGGGHRDVSVVEDNGMNSNIFPHDKLSEYLSAILCLESTVLLGIADDLFDLRWRHKFFLPAIAAIPLLMVYYVDFGVTHVLIPGFMERWLKKTSVDLGLWYYVYMASMAIFCPNSINILAGVNGLEVGQCIVLAILALLNDLLYFSMGPLATRDSHRFSAVLIIPFLGVSLALWKWNRWPATVFVGDTYCYFAGMVFAVVGILGHFSKTMLLLFIPQIVNFIYSCPQLFKLVPCPRHRLPKFNEKDGLMYPSRANLKEEPPKSIFKPILKLLYCLHLIDLEFDENNEIISTSNMTLINLTLVWFGPMREDKLCNTILKLQFCIGILALLGRHAIGAIIFGHDNLWTVR</sequence>
<organism>
    <name type="scientific">Saccharomyces cerevisiae (strain ATCC 204508 / S288c)</name>
    <name type="common">Baker's yeast</name>
    <dbReference type="NCBI Taxonomy" id="559292"/>
    <lineage>
        <taxon>Eukaryota</taxon>
        <taxon>Fungi</taxon>
        <taxon>Dikarya</taxon>
        <taxon>Ascomycota</taxon>
        <taxon>Saccharomycotina</taxon>
        <taxon>Saccharomycetes</taxon>
        <taxon>Saccharomycetales</taxon>
        <taxon>Saccharomycetaceae</taxon>
        <taxon>Saccharomyces</taxon>
    </lineage>
</organism>
<dbReference type="EC" id="2.7.8.15"/>
<dbReference type="EMBL" id="Y00126">
    <property type="protein sequence ID" value="CAA68324.1"/>
    <property type="molecule type" value="Genomic_DNA"/>
</dbReference>
<dbReference type="EMBL" id="Z36112">
    <property type="protein sequence ID" value="CAA85206.1"/>
    <property type="molecule type" value="Genomic_DNA"/>
</dbReference>
<dbReference type="EMBL" id="BK006936">
    <property type="protein sequence ID" value="DAA07359.1"/>
    <property type="molecule type" value="Genomic_DNA"/>
</dbReference>
<dbReference type="PIR" id="A27522">
    <property type="entry name" value="A27522"/>
</dbReference>
<dbReference type="RefSeq" id="NP_009802.3">
    <property type="nucleotide sequence ID" value="NM_001178591.3"/>
</dbReference>
<dbReference type="SMR" id="P07286"/>
<dbReference type="BioGRID" id="32938">
    <property type="interactions" value="51"/>
</dbReference>
<dbReference type="DIP" id="DIP-5364N"/>
<dbReference type="FunCoup" id="P07286">
    <property type="interactions" value="587"/>
</dbReference>
<dbReference type="IntAct" id="P07286">
    <property type="interactions" value="7"/>
</dbReference>
<dbReference type="MINT" id="P07286"/>
<dbReference type="STRING" id="4932.YBR243C"/>
<dbReference type="iPTMnet" id="P07286"/>
<dbReference type="PaxDb" id="4932-YBR243C"/>
<dbReference type="PeptideAtlas" id="P07286"/>
<dbReference type="EnsemblFungi" id="YBR243C_mRNA">
    <property type="protein sequence ID" value="YBR243C"/>
    <property type="gene ID" value="YBR243C"/>
</dbReference>
<dbReference type="GeneID" id="852545"/>
<dbReference type="KEGG" id="sce:YBR243C"/>
<dbReference type="AGR" id="SGD:S000000447"/>
<dbReference type="SGD" id="S000000447">
    <property type="gene designation" value="ALG7"/>
</dbReference>
<dbReference type="VEuPathDB" id="FungiDB:YBR243C"/>
<dbReference type="eggNOG" id="KOG2788">
    <property type="taxonomic scope" value="Eukaryota"/>
</dbReference>
<dbReference type="GeneTree" id="ENSGT00390000011424"/>
<dbReference type="HOGENOM" id="CLU_029942_1_0_1"/>
<dbReference type="InParanoid" id="P07286"/>
<dbReference type="OMA" id="LPHFNAR"/>
<dbReference type="OrthoDB" id="10262326at2759"/>
<dbReference type="BioCyc" id="MetaCyc:YBR243C-MONOMER"/>
<dbReference type="BioCyc" id="YEAST:YBR243C-MONOMER"/>
<dbReference type="Reactome" id="R-SCE-446193">
    <property type="pathway name" value="Biosynthesis of the N-glycan precursor (dolichol lipid-linked oligosaccharide, LLO) and transfer to a nascent protein"/>
</dbReference>
<dbReference type="UniPathway" id="UPA00378"/>
<dbReference type="BioGRID-ORCS" id="852545">
    <property type="hits" value="2 hits in 10 CRISPR screens"/>
</dbReference>
<dbReference type="PRO" id="PR:P07286"/>
<dbReference type="Proteomes" id="UP000002311">
    <property type="component" value="Chromosome II"/>
</dbReference>
<dbReference type="RNAct" id="P07286">
    <property type="molecule type" value="protein"/>
</dbReference>
<dbReference type="GO" id="GO:0005783">
    <property type="term" value="C:endoplasmic reticulum"/>
    <property type="evidence" value="ECO:0007005"/>
    <property type="project" value="SGD"/>
</dbReference>
<dbReference type="GO" id="GO:0016020">
    <property type="term" value="C:membrane"/>
    <property type="evidence" value="ECO:0000318"/>
    <property type="project" value="GO_Central"/>
</dbReference>
<dbReference type="GO" id="GO:0043541">
    <property type="term" value="C:UDP-N-acetylglucosamine transferase complex"/>
    <property type="evidence" value="ECO:0000314"/>
    <property type="project" value="SGD"/>
</dbReference>
<dbReference type="GO" id="GO:0016757">
    <property type="term" value="F:glycosyltransferase activity"/>
    <property type="evidence" value="ECO:0007669"/>
    <property type="project" value="UniProtKB-KW"/>
</dbReference>
<dbReference type="GO" id="GO:0046872">
    <property type="term" value="F:metal ion binding"/>
    <property type="evidence" value="ECO:0007669"/>
    <property type="project" value="UniProtKB-KW"/>
</dbReference>
<dbReference type="GO" id="GO:0003975">
    <property type="term" value="F:UDP-N-acetylglucosamine-dolichyl-phosphate N-acetylglucosaminephosphotransferase activity"/>
    <property type="evidence" value="ECO:0000315"/>
    <property type="project" value="SGD"/>
</dbReference>
<dbReference type="GO" id="GO:0009060">
    <property type="term" value="P:aerobic respiration"/>
    <property type="evidence" value="ECO:0000315"/>
    <property type="project" value="SGD"/>
</dbReference>
<dbReference type="GO" id="GO:0006488">
    <property type="term" value="P:dolichol-linked oligosaccharide biosynthetic process"/>
    <property type="evidence" value="ECO:0000315"/>
    <property type="project" value="UniProtKB"/>
</dbReference>
<dbReference type="GO" id="GO:0006487">
    <property type="term" value="P:protein N-linked glycosylation"/>
    <property type="evidence" value="ECO:0000315"/>
    <property type="project" value="UniProtKB"/>
</dbReference>
<dbReference type="CDD" id="cd06855">
    <property type="entry name" value="GT_GPT_euk"/>
    <property type="match status" value="1"/>
</dbReference>
<dbReference type="InterPro" id="IPR000715">
    <property type="entry name" value="Glycosyl_transferase_4"/>
</dbReference>
<dbReference type="InterPro" id="IPR033895">
    <property type="entry name" value="GPT"/>
</dbReference>
<dbReference type="PANTHER" id="PTHR10571">
    <property type="entry name" value="UDP-N-ACETYLGLUCOSAMINE--DOLICHYL-PHOSPHATE N-ACETYLGLUCOSAMINEPHOSPHOTRANSFERASE"/>
    <property type="match status" value="1"/>
</dbReference>
<dbReference type="PANTHER" id="PTHR10571:SF0">
    <property type="entry name" value="UDP-N-ACETYLGLUCOSAMINE--DOLICHYL-PHOSPHATE N-ACETYLGLUCOSAMINEPHOSPHOTRANSFERASE"/>
    <property type="match status" value="1"/>
</dbReference>
<dbReference type="Pfam" id="PF00953">
    <property type="entry name" value="Glycos_transf_4"/>
    <property type="match status" value="1"/>
</dbReference>
<name>GPT_YEAST</name>
<feature type="chain" id="PRO_0000108765" description="UDP-N-acetylglucosamine--dolichyl-phosphate N-acetylglucosaminephosphotransferase">
    <location>
        <begin position="1"/>
        <end position="448"/>
    </location>
</feature>
<feature type="transmembrane region" description="Helical" evidence="3">
    <location>
        <begin position="24"/>
        <end position="44"/>
    </location>
</feature>
<feature type="transmembrane region" description="Helical" evidence="3">
    <location>
        <begin position="72"/>
        <end position="92"/>
    </location>
</feature>
<feature type="transmembrane region" description="Helical" evidence="3">
    <location>
        <begin position="129"/>
        <end position="149"/>
    </location>
</feature>
<feature type="transmembrane region" description="Helical" evidence="3">
    <location>
        <begin position="157"/>
        <end position="177"/>
    </location>
</feature>
<feature type="transmembrane region" description="Helical" evidence="3">
    <location>
        <begin position="202"/>
        <end position="222"/>
    </location>
</feature>
<feature type="transmembrane region" description="Helical" evidence="3">
    <location>
        <begin position="231"/>
        <end position="251"/>
    </location>
</feature>
<feature type="transmembrane region" description="Helical" evidence="3">
    <location>
        <begin position="256"/>
        <end position="276"/>
    </location>
</feature>
<feature type="transmembrane region" description="Helical" evidence="3">
    <location>
        <begin position="283"/>
        <end position="303"/>
    </location>
</feature>
<feature type="transmembrane region" description="Helical" evidence="3">
    <location>
        <begin position="309"/>
        <end position="329"/>
    </location>
</feature>
<feature type="transmembrane region" description="Helical" evidence="3">
    <location>
        <begin position="387"/>
        <end position="407"/>
    </location>
</feature>
<feature type="transmembrane region" description="Helical" evidence="3">
    <location>
        <begin position="419"/>
        <end position="439"/>
    </location>
</feature>
<feature type="binding site" evidence="2">
    <location>
        <begin position="58"/>
        <end position="60"/>
    </location>
    <ligand>
        <name>UDP-N-acetyl-alpha-D-glucosamine</name>
        <dbReference type="ChEBI" id="CHEBI:57705"/>
    </ligand>
</feature>
<feature type="binding site" evidence="2">
    <location>
        <position position="70"/>
    </location>
    <ligand>
        <name>UDP-N-acetyl-alpha-D-glucosamine</name>
        <dbReference type="ChEBI" id="CHEBI:57705"/>
    </ligand>
</feature>
<feature type="binding site" evidence="2">
    <location>
        <position position="156"/>
    </location>
    <ligand>
        <name>dolichyl phosphate</name>
        <dbReference type="ChEBI" id="CHEBI:57683"/>
    </ligand>
</feature>
<feature type="binding site" evidence="2">
    <location>
        <begin position="210"/>
        <end position="218"/>
    </location>
    <ligand>
        <name>dolichyl phosphate</name>
        <dbReference type="ChEBI" id="CHEBI:57683"/>
    </ligand>
</feature>
<feature type="binding site" evidence="2">
    <location>
        <position position="217"/>
    </location>
    <ligand>
        <name>Mg(2+)</name>
        <dbReference type="ChEBI" id="CHEBI:18420"/>
    </ligand>
</feature>
<feature type="binding site" evidence="2">
    <location>
        <position position="223"/>
    </location>
    <ligand>
        <name>UDP-N-acetyl-alpha-D-glucosamine</name>
        <dbReference type="ChEBI" id="CHEBI:57705"/>
    </ligand>
</feature>
<feature type="binding site" evidence="2">
    <location>
        <position position="287"/>
    </location>
    <ligand>
        <name>Mg(2+)</name>
        <dbReference type="ChEBI" id="CHEBI:18420"/>
    </ligand>
</feature>
<feature type="binding site" evidence="2">
    <location>
        <begin position="336"/>
        <end position="338"/>
    </location>
    <ligand>
        <name>UDP-N-acetyl-alpha-D-glucosamine</name>
        <dbReference type="ChEBI" id="CHEBI:57705"/>
    </ligand>
</feature>
<proteinExistence type="evidence at protein level"/>
<reference key="1">
    <citation type="journal article" date="1987" name="Nucleic Acids Res.">
        <title>Genomic sequence coding for tunicamycin resistance in yeast.</title>
        <authorList>
            <person name="Hartog K.O."/>
            <person name="Bishop B."/>
        </authorList>
    </citation>
    <scope>NUCLEOTIDE SEQUENCE [GENOMIC DNA]</scope>
    <scope>ACTIVITY REGULATION</scope>
</reference>
<reference key="2">
    <citation type="journal article" date="1994" name="EMBO J.">
        <title>Complete DNA sequence of yeast chromosome II.</title>
        <authorList>
            <person name="Feldmann H."/>
            <person name="Aigle M."/>
            <person name="Aljinovic G."/>
            <person name="Andre B."/>
            <person name="Baclet M.C."/>
            <person name="Barthe C."/>
            <person name="Baur A."/>
            <person name="Becam A.-M."/>
            <person name="Biteau N."/>
            <person name="Boles E."/>
            <person name="Brandt T."/>
            <person name="Brendel M."/>
            <person name="Brueckner M."/>
            <person name="Bussereau F."/>
            <person name="Christiansen C."/>
            <person name="Contreras R."/>
            <person name="Crouzet M."/>
            <person name="Cziepluch C."/>
            <person name="Demolis N."/>
            <person name="Delaveau T."/>
            <person name="Doignon F."/>
            <person name="Domdey H."/>
            <person name="Duesterhus S."/>
            <person name="Dubois E."/>
            <person name="Dujon B."/>
            <person name="El Bakkoury M."/>
            <person name="Entian K.-D."/>
            <person name="Feuermann M."/>
            <person name="Fiers W."/>
            <person name="Fobo G.M."/>
            <person name="Fritz C."/>
            <person name="Gassenhuber J."/>
            <person name="Glansdorff N."/>
            <person name="Goffeau A."/>
            <person name="Grivell L.A."/>
            <person name="de Haan M."/>
            <person name="Hein C."/>
            <person name="Herbert C.J."/>
            <person name="Hollenberg C.P."/>
            <person name="Holmstroem K."/>
            <person name="Jacq C."/>
            <person name="Jacquet M."/>
            <person name="Jauniaux J.-C."/>
            <person name="Jonniaux J.-L."/>
            <person name="Kallesoee T."/>
            <person name="Kiesau P."/>
            <person name="Kirchrath L."/>
            <person name="Koetter P."/>
            <person name="Korol S."/>
            <person name="Liebl S."/>
            <person name="Logghe M."/>
            <person name="Lohan A.J.E."/>
            <person name="Louis E.J."/>
            <person name="Li Z.Y."/>
            <person name="Maat M.J."/>
            <person name="Mallet L."/>
            <person name="Mannhaupt G."/>
            <person name="Messenguy F."/>
            <person name="Miosga T."/>
            <person name="Molemans F."/>
            <person name="Mueller S."/>
            <person name="Nasr F."/>
            <person name="Obermaier B."/>
            <person name="Perea J."/>
            <person name="Pierard A."/>
            <person name="Piravandi E."/>
            <person name="Pohl F.M."/>
            <person name="Pohl T.M."/>
            <person name="Potier S."/>
            <person name="Proft M."/>
            <person name="Purnelle B."/>
            <person name="Ramezani Rad M."/>
            <person name="Rieger M."/>
            <person name="Rose M."/>
            <person name="Schaaff-Gerstenschlaeger I."/>
            <person name="Scherens B."/>
            <person name="Schwarzlose C."/>
            <person name="Skala J."/>
            <person name="Slonimski P.P."/>
            <person name="Smits P.H.M."/>
            <person name="Souciet J.-L."/>
            <person name="Steensma H.Y."/>
            <person name="Stucka R."/>
            <person name="Urrestarazu L.A."/>
            <person name="van der Aart Q.J.M."/>
            <person name="Van Dyck L."/>
            <person name="Vassarotti A."/>
            <person name="Vetter I."/>
            <person name="Vierendeels F."/>
            <person name="Vissers S."/>
            <person name="Wagner G."/>
            <person name="de Wergifosse P."/>
            <person name="Wolfe K.H."/>
            <person name="Zagulski M."/>
            <person name="Zimmermann F.K."/>
            <person name="Mewes H.-W."/>
            <person name="Kleine K."/>
        </authorList>
    </citation>
    <scope>NUCLEOTIDE SEQUENCE [LARGE SCALE GENOMIC DNA]</scope>
    <source>
        <strain>ATCC 204508 / S288c</strain>
    </source>
</reference>
<reference key="3">
    <citation type="journal article" date="2014" name="G3 (Bethesda)">
        <title>The reference genome sequence of Saccharomyces cerevisiae: Then and now.</title>
        <authorList>
            <person name="Engel S.R."/>
            <person name="Dietrich F.S."/>
            <person name="Fisk D.G."/>
            <person name="Binkley G."/>
            <person name="Balakrishnan R."/>
            <person name="Costanzo M.C."/>
            <person name="Dwight S.S."/>
            <person name="Hitz B.C."/>
            <person name="Karra K."/>
            <person name="Nash R.S."/>
            <person name="Weng S."/>
            <person name="Wong E.D."/>
            <person name="Lloyd P."/>
            <person name="Skrzypek M.S."/>
            <person name="Miyasato S.R."/>
            <person name="Simison M."/>
            <person name="Cherry J.M."/>
        </authorList>
    </citation>
    <scope>GENOME REANNOTATION</scope>
    <source>
        <strain>ATCC 204508 / S288c</strain>
    </source>
</reference>
<reference key="4">
    <citation type="journal article" date="1984" name="Mol. Cell. Biol.">
        <title>Asparagine-linked glycosylation in Saccharomyces cerevisiae: genetic analysis of an early step.</title>
        <authorList>
            <person name="Barnes G."/>
            <person name="Hansen W.J."/>
            <person name="Holcomb C.L."/>
            <person name="Rine J."/>
        </authorList>
    </citation>
    <scope>FUNCTION</scope>
    <scope>CATALYTIC ACTIVITY</scope>
    <scope>ACTIVITY REGULATION</scope>
    <scope>PATHWAY</scope>
</reference>